<feature type="chain" id="PRO_0000110880" description="Aspartate--tRNA ligase">
    <location>
        <begin position="1"/>
        <end position="588"/>
    </location>
</feature>
<feature type="region of interest" description="Aspartate" evidence="1">
    <location>
        <begin position="196"/>
        <end position="199"/>
    </location>
</feature>
<feature type="binding site" evidence="1">
    <location>
        <position position="172"/>
    </location>
    <ligand>
        <name>L-aspartate</name>
        <dbReference type="ChEBI" id="CHEBI:29991"/>
    </ligand>
</feature>
<feature type="binding site" evidence="1">
    <location>
        <begin position="218"/>
        <end position="220"/>
    </location>
    <ligand>
        <name>ATP</name>
        <dbReference type="ChEBI" id="CHEBI:30616"/>
    </ligand>
</feature>
<feature type="binding site" evidence="1">
    <location>
        <position position="218"/>
    </location>
    <ligand>
        <name>L-aspartate</name>
        <dbReference type="ChEBI" id="CHEBI:29991"/>
    </ligand>
</feature>
<feature type="binding site" evidence="1">
    <location>
        <position position="227"/>
    </location>
    <ligand>
        <name>ATP</name>
        <dbReference type="ChEBI" id="CHEBI:30616"/>
    </ligand>
</feature>
<feature type="binding site" evidence="1">
    <location>
        <position position="449"/>
    </location>
    <ligand>
        <name>L-aspartate</name>
        <dbReference type="ChEBI" id="CHEBI:29991"/>
    </ligand>
</feature>
<feature type="binding site" evidence="1">
    <location>
        <position position="483"/>
    </location>
    <ligand>
        <name>ATP</name>
        <dbReference type="ChEBI" id="CHEBI:30616"/>
    </ligand>
</feature>
<feature type="binding site" evidence="1">
    <location>
        <position position="490"/>
    </location>
    <ligand>
        <name>L-aspartate</name>
        <dbReference type="ChEBI" id="CHEBI:29991"/>
    </ligand>
</feature>
<feature type="binding site" evidence="1">
    <location>
        <begin position="535"/>
        <end position="538"/>
    </location>
    <ligand>
        <name>ATP</name>
        <dbReference type="ChEBI" id="CHEBI:30616"/>
    </ligand>
</feature>
<protein>
    <recommendedName>
        <fullName evidence="1">Aspartate--tRNA ligase</fullName>
        <ecNumber evidence="1">6.1.1.12</ecNumber>
    </recommendedName>
    <alternativeName>
        <fullName evidence="1">Aspartyl-tRNA synthetase</fullName>
        <shortName evidence="1">AspRS</shortName>
    </alternativeName>
</protein>
<name>SYD_HAEIN</name>
<accession>P43817</accession>
<comment type="function">
    <text evidence="1">Catalyzes the attachment of L-aspartate to tRNA(Asp) in a two-step reaction: L-aspartate is first activated by ATP to form Asp-AMP and then transferred to the acceptor end of tRNA(Asp).</text>
</comment>
<comment type="catalytic activity">
    <reaction evidence="1">
        <text>tRNA(Asp) + L-aspartate + ATP = L-aspartyl-tRNA(Asp) + AMP + diphosphate</text>
        <dbReference type="Rhea" id="RHEA:19649"/>
        <dbReference type="Rhea" id="RHEA-COMP:9660"/>
        <dbReference type="Rhea" id="RHEA-COMP:9678"/>
        <dbReference type="ChEBI" id="CHEBI:29991"/>
        <dbReference type="ChEBI" id="CHEBI:30616"/>
        <dbReference type="ChEBI" id="CHEBI:33019"/>
        <dbReference type="ChEBI" id="CHEBI:78442"/>
        <dbReference type="ChEBI" id="CHEBI:78516"/>
        <dbReference type="ChEBI" id="CHEBI:456215"/>
        <dbReference type="EC" id="6.1.1.12"/>
    </reaction>
</comment>
<comment type="subunit">
    <text evidence="1">Homodimer.</text>
</comment>
<comment type="subcellular location">
    <subcellularLocation>
        <location evidence="1">Cytoplasm</location>
    </subcellularLocation>
</comment>
<comment type="similarity">
    <text evidence="1">Belongs to the class-II aminoacyl-tRNA synthetase family. Type 1 subfamily.</text>
</comment>
<evidence type="ECO:0000255" key="1">
    <source>
        <dbReference type="HAMAP-Rule" id="MF_00044"/>
    </source>
</evidence>
<proteinExistence type="inferred from homology"/>
<dbReference type="EC" id="6.1.1.12" evidence="1"/>
<dbReference type="EMBL" id="L42023">
    <property type="protein sequence ID" value="AAC21981.1"/>
    <property type="molecule type" value="Genomic_DNA"/>
</dbReference>
<dbReference type="PIR" id="E64061">
    <property type="entry name" value="E64061"/>
</dbReference>
<dbReference type="RefSeq" id="NP_438483.1">
    <property type="nucleotide sequence ID" value="NC_000907.1"/>
</dbReference>
<dbReference type="SMR" id="P43817"/>
<dbReference type="STRING" id="71421.HI_0317"/>
<dbReference type="EnsemblBacteria" id="AAC21981">
    <property type="protein sequence ID" value="AAC21981"/>
    <property type="gene ID" value="HI_0317"/>
</dbReference>
<dbReference type="KEGG" id="hin:HI_0317"/>
<dbReference type="PATRIC" id="fig|71421.8.peg.334"/>
<dbReference type="eggNOG" id="COG0173">
    <property type="taxonomic scope" value="Bacteria"/>
</dbReference>
<dbReference type="HOGENOM" id="CLU_014330_3_2_6"/>
<dbReference type="OrthoDB" id="9802326at2"/>
<dbReference type="PhylomeDB" id="P43817"/>
<dbReference type="BioCyc" id="HINF71421:G1GJ1-334-MONOMER"/>
<dbReference type="Proteomes" id="UP000000579">
    <property type="component" value="Chromosome"/>
</dbReference>
<dbReference type="GO" id="GO:0005737">
    <property type="term" value="C:cytoplasm"/>
    <property type="evidence" value="ECO:0007669"/>
    <property type="project" value="UniProtKB-SubCell"/>
</dbReference>
<dbReference type="GO" id="GO:0004815">
    <property type="term" value="F:aspartate-tRNA ligase activity"/>
    <property type="evidence" value="ECO:0000318"/>
    <property type="project" value="GO_Central"/>
</dbReference>
<dbReference type="GO" id="GO:0005524">
    <property type="term" value="F:ATP binding"/>
    <property type="evidence" value="ECO:0007669"/>
    <property type="project" value="UniProtKB-UniRule"/>
</dbReference>
<dbReference type="GO" id="GO:0003676">
    <property type="term" value="F:nucleic acid binding"/>
    <property type="evidence" value="ECO:0007669"/>
    <property type="project" value="InterPro"/>
</dbReference>
<dbReference type="GO" id="GO:0006422">
    <property type="term" value="P:aspartyl-tRNA aminoacylation"/>
    <property type="evidence" value="ECO:0000318"/>
    <property type="project" value="GO_Central"/>
</dbReference>
<dbReference type="CDD" id="cd00777">
    <property type="entry name" value="AspRS_core"/>
    <property type="match status" value="1"/>
</dbReference>
<dbReference type="CDD" id="cd04317">
    <property type="entry name" value="EcAspRS_like_N"/>
    <property type="match status" value="1"/>
</dbReference>
<dbReference type="FunFam" id="2.40.50.140:FF:000080">
    <property type="entry name" value="Aspartate--tRNA ligase"/>
    <property type="match status" value="1"/>
</dbReference>
<dbReference type="Gene3D" id="3.30.930.10">
    <property type="entry name" value="Bira Bifunctional Protein, Domain 2"/>
    <property type="match status" value="1"/>
</dbReference>
<dbReference type="Gene3D" id="3.30.1360.30">
    <property type="entry name" value="GAD-like domain"/>
    <property type="match status" value="1"/>
</dbReference>
<dbReference type="Gene3D" id="2.40.50.140">
    <property type="entry name" value="Nucleic acid-binding proteins"/>
    <property type="match status" value="1"/>
</dbReference>
<dbReference type="HAMAP" id="MF_00044">
    <property type="entry name" value="Asp_tRNA_synth_type1"/>
    <property type="match status" value="1"/>
</dbReference>
<dbReference type="InterPro" id="IPR004364">
    <property type="entry name" value="Aa-tRNA-synt_II"/>
</dbReference>
<dbReference type="InterPro" id="IPR006195">
    <property type="entry name" value="aa-tRNA-synth_II"/>
</dbReference>
<dbReference type="InterPro" id="IPR045864">
    <property type="entry name" value="aa-tRNA-synth_II/BPL/LPL"/>
</dbReference>
<dbReference type="InterPro" id="IPR004524">
    <property type="entry name" value="Asp-tRNA-ligase_1"/>
</dbReference>
<dbReference type="InterPro" id="IPR047089">
    <property type="entry name" value="Asp-tRNA-ligase_1_N"/>
</dbReference>
<dbReference type="InterPro" id="IPR002312">
    <property type="entry name" value="Asp/Asn-tRNA-synth_IIb"/>
</dbReference>
<dbReference type="InterPro" id="IPR047090">
    <property type="entry name" value="AspRS_core"/>
</dbReference>
<dbReference type="InterPro" id="IPR004115">
    <property type="entry name" value="GAD-like_sf"/>
</dbReference>
<dbReference type="InterPro" id="IPR029351">
    <property type="entry name" value="GAD_dom"/>
</dbReference>
<dbReference type="InterPro" id="IPR012340">
    <property type="entry name" value="NA-bd_OB-fold"/>
</dbReference>
<dbReference type="InterPro" id="IPR004365">
    <property type="entry name" value="NA-bd_OB_tRNA"/>
</dbReference>
<dbReference type="NCBIfam" id="TIGR00459">
    <property type="entry name" value="aspS_bact"/>
    <property type="match status" value="1"/>
</dbReference>
<dbReference type="NCBIfam" id="NF001750">
    <property type="entry name" value="PRK00476.1"/>
    <property type="match status" value="1"/>
</dbReference>
<dbReference type="PANTHER" id="PTHR22594:SF5">
    <property type="entry name" value="ASPARTATE--TRNA LIGASE, MITOCHONDRIAL"/>
    <property type="match status" value="1"/>
</dbReference>
<dbReference type="PANTHER" id="PTHR22594">
    <property type="entry name" value="ASPARTYL/LYSYL-TRNA SYNTHETASE"/>
    <property type="match status" value="1"/>
</dbReference>
<dbReference type="Pfam" id="PF02938">
    <property type="entry name" value="GAD"/>
    <property type="match status" value="1"/>
</dbReference>
<dbReference type="Pfam" id="PF00152">
    <property type="entry name" value="tRNA-synt_2"/>
    <property type="match status" value="1"/>
</dbReference>
<dbReference type="Pfam" id="PF01336">
    <property type="entry name" value="tRNA_anti-codon"/>
    <property type="match status" value="1"/>
</dbReference>
<dbReference type="PRINTS" id="PR01042">
    <property type="entry name" value="TRNASYNTHASP"/>
</dbReference>
<dbReference type="SUPFAM" id="SSF55681">
    <property type="entry name" value="Class II aaRS and biotin synthetases"/>
    <property type="match status" value="1"/>
</dbReference>
<dbReference type="SUPFAM" id="SSF55261">
    <property type="entry name" value="GAD domain-like"/>
    <property type="match status" value="1"/>
</dbReference>
<dbReference type="SUPFAM" id="SSF50249">
    <property type="entry name" value="Nucleic acid-binding proteins"/>
    <property type="match status" value="1"/>
</dbReference>
<dbReference type="PROSITE" id="PS50862">
    <property type="entry name" value="AA_TRNA_LIGASE_II"/>
    <property type="match status" value="1"/>
</dbReference>
<organism>
    <name type="scientific">Haemophilus influenzae (strain ATCC 51907 / DSM 11121 / KW20 / Rd)</name>
    <dbReference type="NCBI Taxonomy" id="71421"/>
    <lineage>
        <taxon>Bacteria</taxon>
        <taxon>Pseudomonadati</taxon>
        <taxon>Pseudomonadota</taxon>
        <taxon>Gammaproteobacteria</taxon>
        <taxon>Pasteurellales</taxon>
        <taxon>Pasteurellaceae</taxon>
        <taxon>Haemophilus</taxon>
    </lineage>
</organism>
<gene>
    <name evidence="1" type="primary">aspS</name>
    <name type="ordered locus">HI_0317</name>
</gene>
<sequence>MMRTHYCGALNRNNIGQDVTLSGWVHRRRDLGGLIFIDMRDRDGIVQVCFDPKYQDALTAAAGLRNEFCIQIKGEVIARPDNQINKNMATGEVEVLAKELRIYNASDVLPLDFNQNNTEEQRLKYRYLDLRRPEMAQRLKTRAKITSFVRRFMDDNGFLDIETPMLTKATPEGARDYLVPSRVHKGKFYALPQSPQLFKQLLMMSGFDRYYQIVKCFRDEDLRADRQPEFTQIDVETSFLTAPEVREIMERMVHGLWLDTIGVDLGKFPVMTWQEAMRRFGSDKPDLRNPLEMVDVADIVKDVEFKVFNEPANNPNGRVAVIRVPNGAEITRKQIDEYTQFVGIYGAKGLAWAKVNDINAGLEGVQSPIAKFLNEDVWKGLAERVNAQTGDILFFGADKWQTTTDAMGALRLKLGRDLGLTRLDEWQPLWVIDFPMFERDEEGNLAAMHHPFTSPKDFSPEQLEADPTSAVANAYDMVINGYEVGGGSVRIFDPKMQQTVFRILGIDEEQQREKFGFLLDALKFGTPPHAGLAFGLDRLTMLLTGTENIRDVIAFPKTTAAACLMTEAPSFANPQALEELAISVVKAE</sequence>
<reference key="1">
    <citation type="journal article" date="1995" name="Science">
        <title>Whole-genome random sequencing and assembly of Haemophilus influenzae Rd.</title>
        <authorList>
            <person name="Fleischmann R.D."/>
            <person name="Adams M.D."/>
            <person name="White O."/>
            <person name="Clayton R.A."/>
            <person name="Kirkness E.F."/>
            <person name="Kerlavage A.R."/>
            <person name="Bult C.J."/>
            <person name="Tomb J.-F."/>
            <person name="Dougherty B.A."/>
            <person name="Merrick J.M."/>
            <person name="McKenney K."/>
            <person name="Sutton G.G."/>
            <person name="FitzHugh W."/>
            <person name="Fields C.A."/>
            <person name="Gocayne J.D."/>
            <person name="Scott J.D."/>
            <person name="Shirley R."/>
            <person name="Liu L.-I."/>
            <person name="Glodek A."/>
            <person name="Kelley J.M."/>
            <person name="Weidman J.F."/>
            <person name="Phillips C.A."/>
            <person name="Spriggs T."/>
            <person name="Hedblom E."/>
            <person name="Cotton M.D."/>
            <person name="Utterback T.R."/>
            <person name="Hanna M.C."/>
            <person name="Nguyen D.T."/>
            <person name="Saudek D.M."/>
            <person name="Brandon R.C."/>
            <person name="Fine L.D."/>
            <person name="Fritchman J.L."/>
            <person name="Fuhrmann J.L."/>
            <person name="Geoghagen N.S.M."/>
            <person name="Gnehm C.L."/>
            <person name="McDonald L.A."/>
            <person name="Small K.V."/>
            <person name="Fraser C.M."/>
            <person name="Smith H.O."/>
            <person name="Venter J.C."/>
        </authorList>
    </citation>
    <scope>NUCLEOTIDE SEQUENCE [LARGE SCALE GENOMIC DNA]</scope>
    <source>
        <strain>ATCC 51907 / DSM 11121 / KW20 / Rd</strain>
    </source>
</reference>
<keyword id="KW-0030">Aminoacyl-tRNA synthetase</keyword>
<keyword id="KW-0067">ATP-binding</keyword>
<keyword id="KW-0963">Cytoplasm</keyword>
<keyword id="KW-0436">Ligase</keyword>
<keyword id="KW-0547">Nucleotide-binding</keyword>
<keyword id="KW-0648">Protein biosynthesis</keyword>
<keyword id="KW-1185">Reference proteome</keyword>